<keyword id="KW-0031">Aminopeptidase</keyword>
<keyword id="KW-0378">Hydrolase</keyword>
<keyword id="KW-0479">Metal-binding</keyword>
<keyword id="KW-0645">Protease</keyword>
<keyword id="KW-1185">Reference proteome</keyword>
<feature type="chain" id="PRO_0000148975" description="Methionine aminopeptidase">
    <location>
        <begin position="1"/>
        <end position="294"/>
    </location>
</feature>
<feature type="binding site" evidence="1">
    <location>
        <position position="65"/>
    </location>
    <ligand>
        <name>substrate</name>
    </ligand>
</feature>
<feature type="binding site" evidence="1">
    <location>
        <position position="85"/>
    </location>
    <ligand>
        <name>a divalent metal cation</name>
        <dbReference type="ChEBI" id="CHEBI:60240"/>
        <label>1</label>
    </ligand>
</feature>
<feature type="binding site" evidence="1">
    <location>
        <position position="96"/>
    </location>
    <ligand>
        <name>a divalent metal cation</name>
        <dbReference type="ChEBI" id="CHEBI:60240"/>
        <label>1</label>
    </ligand>
</feature>
<feature type="binding site" evidence="1">
    <location>
        <position position="96"/>
    </location>
    <ligand>
        <name>a divalent metal cation</name>
        <dbReference type="ChEBI" id="CHEBI:60240"/>
        <label>2</label>
        <note>catalytic</note>
    </ligand>
</feature>
<feature type="binding site" evidence="1">
    <location>
        <position position="156"/>
    </location>
    <ligand>
        <name>a divalent metal cation</name>
        <dbReference type="ChEBI" id="CHEBI:60240"/>
        <label>2</label>
        <note>catalytic</note>
    </ligand>
</feature>
<feature type="binding site" evidence="1">
    <location>
        <position position="164"/>
    </location>
    <ligand>
        <name>substrate</name>
    </ligand>
</feature>
<feature type="binding site" evidence="1">
    <location>
        <position position="189"/>
    </location>
    <ligand>
        <name>a divalent metal cation</name>
        <dbReference type="ChEBI" id="CHEBI:60240"/>
        <label>2</label>
        <note>catalytic</note>
    </ligand>
</feature>
<feature type="binding site" evidence="1">
    <location>
        <position position="279"/>
    </location>
    <ligand>
        <name>a divalent metal cation</name>
        <dbReference type="ChEBI" id="CHEBI:60240"/>
        <label>1</label>
    </ligand>
</feature>
<feature type="binding site" evidence="1">
    <location>
        <position position="279"/>
    </location>
    <ligand>
        <name>a divalent metal cation</name>
        <dbReference type="ChEBI" id="CHEBI:60240"/>
        <label>2</label>
        <note>catalytic</note>
    </ligand>
</feature>
<name>MAP2_METJA</name>
<accession>Q58725</accession>
<reference key="1">
    <citation type="journal article" date="1996" name="Science">
        <title>Complete genome sequence of the methanogenic archaeon, Methanococcus jannaschii.</title>
        <authorList>
            <person name="Bult C.J."/>
            <person name="White O."/>
            <person name="Olsen G.J."/>
            <person name="Zhou L."/>
            <person name="Fleischmann R.D."/>
            <person name="Sutton G.G."/>
            <person name="Blake J.A."/>
            <person name="FitzGerald L.M."/>
            <person name="Clayton R.A."/>
            <person name="Gocayne J.D."/>
            <person name="Kerlavage A.R."/>
            <person name="Dougherty B.A."/>
            <person name="Tomb J.-F."/>
            <person name="Adams M.D."/>
            <person name="Reich C.I."/>
            <person name="Overbeek R."/>
            <person name="Kirkness E.F."/>
            <person name="Weinstock K.G."/>
            <person name="Merrick J.M."/>
            <person name="Glodek A."/>
            <person name="Scott J.L."/>
            <person name="Geoghagen N.S.M."/>
            <person name="Weidman J.F."/>
            <person name="Fuhrmann J.L."/>
            <person name="Nguyen D."/>
            <person name="Utterback T.R."/>
            <person name="Kelley J.M."/>
            <person name="Peterson J.D."/>
            <person name="Sadow P.W."/>
            <person name="Hanna M.C."/>
            <person name="Cotton M.D."/>
            <person name="Roberts K.M."/>
            <person name="Hurst M.A."/>
            <person name="Kaine B.P."/>
            <person name="Borodovsky M."/>
            <person name="Klenk H.-P."/>
            <person name="Fraser C.M."/>
            <person name="Smith H.O."/>
            <person name="Woese C.R."/>
            <person name="Venter J.C."/>
        </authorList>
    </citation>
    <scope>NUCLEOTIDE SEQUENCE [LARGE SCALE GENOMIC DNA]</scope>
    <source>
        <strain>ATCC 43067 / DSM 2661 / JAL-1 / JCM 10045 / NBRC 100440</strain>
    </source>
</reference>
<organism>
    <name type="scientific">Methanocaldococcus jannaschii (strain ATCC 43067 / DSM 2661 / JAL-1 / JCM 10045 / NBRC 100440)</name>
    <name type="common">Methanococcus jannaschii</name>
    <dbReference type="NCBI Taxonomy" id="243232"/>
    <lineage>
        <taxon>Archaea</taxon>
        <taxon>Methanobacteriati</taxon>
        <taxon>Methanobacteriota</taxon>
        <taxon>Methanomada group</taxon>
        <taxon>Methanococci</taxon>
        <taxon>Methanococcales</taxon>
        <taxon>Methanocaldococcaceae</taxon>
        <taxon>Methanocaldococcus</taxon>
    </lineage>
</organism>
<proteinExistence type="inferred from homology"/>
<sequence>MEIEGYEKIIEAGKIASKVREEAVKLIXPGVKLLEVAEFVENRIRELGGEPAFPCNISINEIAAHYTPKLNDNLEFKDDDVVKLDLGAHVDGYIADTAITVDLSNSYKDLVKASEDALYTVIKEINPPMNIGEMGKIIQEVIESYGYKPISNLSGHVMHRYELHTGISIPNVYERTNQYIDVGDLVAIEPFATDGFGMVKDGNLGNIYKFLAKRPIRLPQARKLLDVISKNYPYLPFAERWVLKNESERLALNSLIRASCIYGYPILKERENGIVGQAEHTILITENGVEITTK</sequence>
<protein>
    <recommendedName>
        <fullName evidence="1">Methionine aminopeptidase</fullName>
        <shortName evidence="1">MAP</shortName>
        <shortName evidence="1">MetAP</shortName>
        <ecNumber evidence="1">3.4.11.18</ecNumber>
    </recommendedName>
    <alternativeName>
        <fullName evidence="1">Peptidase M</fullName>
    </alternativeName>
</protein>
<evidence type="ECO:0000255" key="1">
    <source>
        <dbReference type="HAMAP-Rule" id="MF_01975"/>
    </source>
</evidence>
<comment type="function">
    <text evidence="1">Removes the N-terminal methionine from nascent proteins. The N-terminal methionine is often cleaved when the second residue in the primary sequence is small and uncharged (Met-Ala-, Cys, Gly, Pro, Ser, Thr, or Val).</text>
</comment>
<comment type="catalytic activity">
    <reaction evidence="1">
        <text>Release of N-terminal amino acids, preferentially methionine, from peptides and arylamides.</text>
        <dbReference type="EC" id="3.4.11.18"/>
    </reaction>
</comment>
<comment type="cofactor">
    <cofactor evidence="1">
        <name>Co(2+)</name>
        <dbReference type="ChEBI" id="CHEBI:48828"/>
    </cofactor>
    <cofactor evidence="1">
        <name>Zn(2+)</name>
        <dbReference type="ChEBI" id="CHEBI:29105"/>
    </cofactor>
    <cofactor evidence="1">
        <name>Mn(2+)</name>
        <dbReference type="ChEBI" id="CHEBI:29035"/>
    </cofactor>
    <cofactor evidence="1">
        <name>Fe(2+)</name>
        <dbReference type="ChEBI" id="CHEBI:29033"/>
    </cofactor>
    <text evidence="1">Binds 2 divalent metal cations per subunit. Has a high-affinity and a low affinity metal-binding site. The true nature of the physiological cofactor is under debate. The enzyme is active with cobalt, zinc, manganese or divalent iron ions. Most likely, methionine aminopeptidases function as mononuclear Fe(2+)-metalloproteases under physiological conditions, and the catalytically relevant metal-binding site has been assigned to the histidine-containing high-affinity site.</text>
</comment>
<comment type="subunit">
    <text evidence="1">Monomer.</text>
</comment>
<comment type="similarity">
    <text evidence="1">Belongs to the peptidase M24A family. Methionine aminopeptidase archaeal type 2 subfamily.</text>
</comment>
<dbReference type="EC" id="3.4.11.18" evidence="1"/>
<dbReference type="EMBL" id="L77117">
    <property type="protein sequence ID" value="AAB99338.1"/>
    <property type="molecule type" value="Genomic_DNA"/>
</dbReference>
<dbReference type="PIR" id="H64465">
    <property type="entry name" value="H64465"/>
</dbReference>
<dbReference type="RefSeq" id="WP_010870846.1">
    <property type="nucleotide sequence ID" value="NC_000909.1"/>
</dbReference>
<dbReference type="FunCoup" id="Q58725">
    <property type="interactions" value="244"/>
</dbReference>
<dbReference type="STRING" id="243232.MJ_1329"/>
<dbReference type="MEROPS" id="M24.035"/>
<dbReference type="PaxDb" id="243232-MJ_1329"/>
<dbReference type="EnsemblBacteria" id="AAB99338">
    <property type="protein sequence ID" value="AAB99338"/>
    <property type="gene ID" value="MJ_1329"/>
</dbReference>
<dbReference type="GeneID" id="1452231"/>
<dbReference type="KEGG" id="mja:MJ_1329"/>
<dbReference type="eggNOG" id="arCOG01001">
    <property type="taxonomic scope" value="Archaea"/>
</dbReference>
<dbReference type="HOGENOM" id="CLU_015857_7_0_2"/>
<dbReference type="InParanoid" id="Q58725"/>
<dbReference type="OrthoDB" id="372008at2157"/>
<dbReference type="PhylomeDB" id="Q58725"/>
<dbReference type="Proteomes" id="UP000000805">
    <property type="component" value="Chromosome"/>
</dbReference>
<dbReference type="GO" id="GO:0005737">
    <property type="term" value="C:cytoplasm"/>
    <property type="evidence" value="ECO:0000318"/>
    <property type="project" value="GO_Central"/>
</dbReference>
<dbReference type="GO" id="GO:0004177">
    <property type="term" value="F:aminopeptidase activity"/>
    <property type="evidence" value="ECO:0000318"/>
    <property type="project" value="GO_Central"/>
</dbReference>
<dbReference type="GO" id="GO:0004239">
    <property type="term" value="F:initiator methionyl aminopeptidase activity"/>
    <property type="evidence" value="ECO:0007669"/>
    <property type="project" value="UniProtKB-UniRule"/>
</dbReference>
<dbReference type="GO" id="GO:0046872">
    <property type="term" value="F:metal ion binding"/>
    <property type="evidence" value="ECO:0007669"/>
    <property type="project" value="UniProtKB-UniRule"/>
</dbReference>
<dbReference type="GO" id="GO:0070006">
    <property type="term" value="F:metalloaminopeptidase activity"/>
    <property type="evidence" value="ECO:0007669"/>
    <property type="project" value="UniProtKB-UniRule"/>
</dbReference>
<dbReference type="GO" id="GO:0008235">
    <property type="term" value="F:metalloexopeptidase activity"/>
    <property type="evidence" value="ECO:0000318"/>
    <property type="project" value="GO_Central"/>
</dbReference>
<dbReference type="GO" id="GO:0006508">
    <property type="term" value="P:proteolysis"/>
    <property type="evidence" value="ECO:0007669"/>
    <property type="project" value="UniProtKB-KW"/>
</dbReference>
<dbReference type="CDD" id="cd01088">
    <property type="entry name" value="MetAP2"/>
    <property type="match status" value="1"/>
</dbReference>
<dbReference type="Gene3D" id="3.90.230.10">
    <property type="entry name" value="Creatinase/methionine aminopeptidase superfamily"/>
    <property type="match status" value="1"/>
</dbReference>
<dbReference type="Gene3D" id="1.10.10.10">
    <property type="entry name" value="Winged helix-like DNA-binding domain superfamily/Winged helix DNA-binding domain"/>
    <property type="match status" value="1"/>
</dbReference>
<dbReference type="HAMAP" id="MF_01975">
    <property type="entry name" value="MetAP_2_arc"/>
    <property type="match status" value="1"/>
</dbReference>
<dbReference type="InterPro" id="IPR036005">
    <property type="entry name" value="Creatinase/aminopeptidase-like"/>
</dbReference>
<dbReference type="InterPro" id="IPR050247">
    <property type="entry name" value="Met_Aminopeptidase_Type2"/>
</dbReference>
<dbReference type="InterPro" id="IPR028595">
    <property type="entry name" value="MetAP_archaeal"/>
</dbReference>
<dbReference type="InterPro" id="IPR000994">
    <property type="entry name" value="Pept_M24"/>
</dbReference>
<dbReference type="InterPro" id="IPR001714">
    <property type="entry name" value="Pept_M24_MAP"/>
</dbReference>
<dbReference type="InterPro" id="IPR002468">
    <property type="entry name" value="Pept_M24A_MAP2"/>
</dbReference>
<dbReference type="InterPro" id="IPR018349">
    <property type="entry name" value="Pept_M24A_MAP2_BS"/>
</dbReference>
<dbReference type="InterPro" id="IPR036388">
    <property type="entry name" value="WH-like_DNA-bd_sf"/>
</dbReference>
<dbReference type="InterPro" id="IPR036390">
    <property type="entry name" value="WH_DNA-bd_sf"/>
</dbReference>
<dbReference type="NCBIfam" id="TIGR00501">
    <property type="entry name" value="met_pdase_II"/>
    <property type="match status" value="1"/>
</dbReference>
<dbReference type="PANTHER" id="PTHR45777">
    <property type="entry name" value="METHIONINE AMINOPEPTIDASE 2"/>
    <property type="match status" value="1"/>
</dbReference>
<dbReference type="PANTHER" id="PTHR45777:SF2">
    <property type="entry name" value="METHIONINE AMINOPEPTIDASE 2"/>
    <property type="match status" value="1"/>
</dbReference>
<dbReference type="Pfam" id="PF00557">
    <property type="entry name" value="Peptidase_M24"/>
    <property type="match status" value="1"/>
</dbReference>
<dbReference type="PRINTS" id="PR00599">
    <property type="entry name" value="MAPEPTIDASE"/>
</dbReference>
<dbReference type="SUPFAM" id="SSF55920">
    <property type="entry name" value="Creatinase/aminopeptidase"/>
    <property type="match status" value="1"/>
</dbReference>
<dbReference type="SUPFAM" id="SSF46785">
    <property type="entry name" value="Winged helix' DNA-binding domain"/>
    <property type="match status" value="1"/>
</dbReference>
<dbReference type="PROSITE" id="PS01202">
    <property type="entry name" value="MAP_2"/>
    <property type="match status" value="1"/>
</dbReference>
<gene>
    <name evidence="1" type="primary">map</name>
    <name type="ordered locus">MJ1329</name>
</gene>